<accession>Q3M998</accession>
<name>TRHO_TRIV2</name>
<dbReference type="EC" id="1.14.-.-" evidence="1"/>
<dbReference type="EMBL" id="CP000117">
    <property type="protein sequence ID" value="ABA22438.1"/>
    <property type="molecule type" value="Genomic_DNA"/>
</dbReference>
<dbReference type="SMR" id="Q3M998"/>
<dbReference type="STRING" id="240292.Ava_2825"/>
<dbReference type="KEGG" id="ava:Ava_2825"/>
<dbReference type="eggNOG" id="COG1054">
    <property type="taxonomic scope" value="Bacteria"/>
</dbReference>
<dbReference type="HOGENOM" id="CLU_038878_0_0_3"/>
<dbReference type="Proteomes" id="UP000002533">
    <property type="component" value="Chromosome"/>
</dbReference>
<dbReference type="GO" id="GO:0016705">
    <property type="term" value="F:oxidoreductase activity, acting on paired donors, with incorporation or reduction of molecular oxygen"/>
    <property type="evidence" value="ECO:0007669"/>
    <property type="project" value="UniProtKB-UniRule"/>
</dbReference>
<dbReference type="GO" id="GO:0006400">
    <property type="term" value="P:tRNA modification"/>
    <property type="evidence" value="ECO:0007669"/>
    <property type="project" value="UniProtKB-UniRule"/>
</dbReference>
<dbReference type="CDD" id="cd01518">
    <property type="entry name" value="RHOD_YceA"/>
    <property type="match status" value="1"/>
</dbReference>
<dbReference type="Gene3D" id="3.30.70.100">
    <property type="match status" value="1"/>
</dbReference>
<dbReference type="Gene3D" id="3.40.250.10">
    <property type="entry name" value="Rhodanese-like domain"/>
    <property type="match status" value="1"/>
</dbReference>
<dbReference type="HAMAP" id="MF_00469">
    <property type="entry name" value="TrhO"/>
    <property type="match status" value="1"/>
</dbReference>
<dbReference type="InterPro" id="IPR001763">
    <property type="entry name" value="Rhodanese-like_dom"/>
</dbReference>
<dbReference type="InterPro" id="IPR036873">
    <property type="entry name" value="Rhodanese-like_dom_sf"/>
</dbReference>
<dbReference type="InterPro" id="IPR020936">
    <property type="entry name" value="TrhO"/>
</dbReference>
<dbReference type="InterPro" id="IPR040503">
    <property type="entry name" value="TRHO_N"/>
</dbReference>
<dbReference type="NCBIfam" id="NF001136">
    <property type="entry name" value="PRK00142.1-4"/>
    <property type="match status" value="1"/>
</dbReference>
<dbReference type="PANTHER" id="PTHR43268:SF3">
    <property type="entry name" value="RHODANESE-LIKE DOMAIN-CONTAINING PROTEIN 7-RELATED"/>
    <property type="match status" value="1"/>
</dbReference>
<dbReference type="PANTHER" id="PTHR43268">
    <property type="entry name" value="THIOSULFATE SULFURTRANSFERASE/RHODANESE-LIKE DOMAIN-CONTAINING PROTEIN 2"/>
    <property type="match status" value="1"/>
</dbReference>
<dbReference type="Pfam" id="PF00581">
    <property type="entry name" value="Rhodanese"/>
    <property type="match status" value="1"/>
</dbReference>
<dbReference type="Pfam" id="PF17773">
    <property type="entry name" value="UPF0176_N"/>
    <property type="match status" value="1"/>
</dbReference>
<dbReference type="SMART" id="SM00450">
    <property type="entry name" value="RHOD"/>
    <property type="match status" value="1"/>
</dbReference>
<dbReference type="SUPFAM" id="SSF52821">
    <property type="entry name" value="Rhodanese/Cell cycle control phosphatase"/>
    <property type="match status" value="1"/>
</dbReference>
<dbReference type="PROSITE" id="PS50206">
    <property type="entry name" value="RHODANESE_3"/>
    <property type="match status" value="1"/>
</dbReference>
<keyword id="KW-0560">Oxidoreductase</keyword>
<keyword id="KW-0819">tRNA processing</keyword>
<reference key="1">
    <citation type="journal article" date="2014" name="Stand. Genomic Sci.">
        <title>Complete genome sequence of Anabaena variabilis ATCC 29413.</title>
        <authorList>
            <person name="Thiel T."/>
            <person name="Pratte B.S."/>
            <person name="Zhong J."/>
            <person name="Goodwin L."/>
            <person name="Copeland A."/>
            <person name="Lucas S."/>
            <person name="Han C."/>
            <person name="Pitluck S."/>
            <person name="Land M.L."/>
            <person name="Kyrpides N.C."/>
            <person name="Woyke T."/>
        </authorList>
    </citation>
    <scope>NUCLEOTIDE SEQUENCE [LARGE SCALE GENOMIC DNA]</scope>
    <source>
        <strain>ATCC 29413 / PCC 7937</strain>
    </source>
</reference>
<feature type="chain" id="PRO_0000242908" description="tRNA uridine(34) hydroxylase">
    <location>
        <begin position="1"/>
        <end position="305"/>
    </location>
</feature>
<feature type="domain" description="Rhodanese" evidence="1">
    <location>
        <begin position="126"/>
        <end position="220"/>
    </location>
</feature>
<feature type="active site" description="Cysteine persulfide intermediate" evidence="1">
    <location>
        <position position="180"/>
    </location>
</feature>
<proteinExistence type="inferred from homology"/>
<sequence>MNQENTQIVAAFYKFVSLPDFTEKQVPLLAYCLAQDIKGTILLAKEGINGTIAGSRLSIDNVLSYLRADLRLQDLEHKESTADTPPFERMKVRLKKEIVTLGLPEVDPNEQVGTYVTPEEWNELISDPEVIVIDTRNDYEVHIGTFQGAQNPQTNSFRDFPEYVRQNLDPNQHKKVAMFCTGGIRCEKASSFMLSQGFAEVYHLKGGILKYLEQIPPEESLWQGECFVFDERIAVVHGLEPGTHELCFCCGHPLAEEDKASPQYEEGISCSHCFDSLTEDKRTRQQEKWRQYQLKNSHSLGNSKL</sequence>
<protein>
    <recommendedName>
        <fullName evidence="1">tRNA uridine(34) hydroxylase</fullName>
        <ecNumber evidence="1">1.14.-.-</ecNumber>
    </recommendedName>
    <alternativeName>
        <fullName evidence="1">tRNA hydroxylation protein O</fullName>
    </alternativeName>
</protein>
<evidence type="ECO:0000255" key="1">
    <source>
        <dbReference type="HAMAP-Rule" id="MF_00469"/>
    </source>
</evidence>
<comment type="function">
    <text evidence="1">Catalyzes oxygen-dependent 5-hydroxyuridine (ho5U) modification at position 34 in tRNAs.</text>
</comment>
<comment type="catalytic activity">
    <reaction evidence="1">
        <text>uridine(34) in tRNA + AH2 + O2 = 5-hydroxyuridine(34) in tRNA + A + H2O</text>
        <dbReference type="Rhea" id="RHEA:64224"/>
        <dbReference type="Rhea" id="RHEA-COMP:11727"/>
        <dbReference type="Rhea" id="RHEA-COMP:13381"/>
        <dbReference type="ChEBI" id="CHEBI:13193"/>
        <dbReference type="ChEBI" id="CHEBI:15377"/>
        <dbReference type="ChEBI" id="CHEBI:15379"/>
        <dbReference type="ChEBI" id="CHEBI:17499"/>
        <dbReference type="ChEBI" id="CHEBI:65315"/>
        <dbReference type="ChEBI" id="CHEBI:136877"/>
    </reaction>
</comment>
<comment type="similarity">
    <text evidence="1">Belongs to the TrhO family.</text>
</comment>
<gene>
    <name evidence="1" type="primary">trhO</name>
    <name type="ordered locus">Ava_2825</name>
</gene>
<organism>
    <name type="scientific">Trichormus variabilis (strain ATCC 29413 / PCC 7937)</name>
    <name type="common">Anabaena variabilis</name>
    <dbReference type="NCBI Taxonomy" id="240292"/>
    <lineage>
        <taxon>Bacteria</taxon>
        <taxon>Bacillati</taxon>
        <taxon>Cyanobacteriota</taxon>
        <taxon>Cyanophyceae</taxon>
        <taxon>Nostocales</taxon>
        <taxon>Nostocaceae</taxon>
        <taxon>Trichormus</taxon>
    </lineage>
</organism>